<protein>
    <recommendedName>
        <fullName evidence="1">Large ribosomal subunit protein bL19</fullName>
    </recommendedName>
    <alternativeName>
        <fullName evidence="2">50S ribosomal protein L19</fullName>
    </alternativeName>
</protein>
<dbReference type="EMBL" id="CP001186">
    <property type="protein sequence ID" value="ACK98076.1"/>
    <property type="molecule type" value="Genomic_DNA"/>
</dbReference>
<dbReference type="RefSeq" id="WP_001186516.1">
    <property type="nucleotide sequence ID" value="NC_011772.1"/>
</dbReference>
<dbReference type="SMR" id="B7IUJ9"/>
<dbReference type="GeneID" id="93007272"/>
<dbReference type="KEGG" id="bcg:BCG9842_B1305"/>
<dbReference type="HOGENOM" id="CLU_103507_2_1_9"/>
<dbReference type="Proteomes" id="UP000006744">
    <property type="component" value="Chromosome"/>
</dbReference>
<dbReference type="GO" id="GO:0022625">
    <property type="term" value="C:cytosolic large ribosomal subunit"/>
    <property type="evidence" value="ECO:0007669"/>
    <property type="project" value="TreeGrafter"/>
</dbReference>
<dbReference type="GO" id="GO:0003735">
    <property type="term" value="F:structural constituent of ribosome"/>
    <property type="evidence" value="ECO:0007669"/>
    <property type="project" value="InterPro"/>
</dbReference>
<dbReference type="GO" id="GO:0006412">
    <property type="term" value="P:translation"/>
    <property type="evidence" value="ECO:0007669"/>
    <property type="project" value="UniProtKB-UniRule"/>
</dbReference>
<dbReference type="FunFam" id="2.30.30.790:FF:000001">
    <property type="entry name" value="50S ribosomal protein L19"/>
    <property type="match status" value="1"/>
</dbReference>
<dbReference type="Gene3D" id="2.30.30.790">
    <property type="match status" value="1"/>
</dbReference>
<dbReference type="HAMAP" id="MF_00402">
    <property type="entry name" value="Ribosomal_bL19"/>
    <property type="match status" value="1"/>
</dbReference>
<dbReference type="InterPro" id="IPR001857">
    <property type="entry name" value="Ribosomal_bL19"/>
</dbReference>
<dbReference type="InterPro" id="IPR018257">
    <property type="entry name" value="Ribosomal_bL19_CS"/>
</dbReference>
<dbReference type="InterPro" id="IPR038657">
    <property type="entry name" value="Ribosomal_bL19_sf"/>
</dbReference>
<dbReference type="InterPro" id="IPR008991">
    <property type="entry name" value="Translation_prot_SH3-like_sf"/>
</dbReference>
<dbReference type="NCBIfam" id="TIGR01024">
    <property type="entry name" value="rplS_bact"/>
    <property type="match status" value="1"/>
</dbReference>
<dbReference type="PANTHER" id="PTHR15680:SF9">
    <property type="entry name" value="LARGE RIBOSOMAL SUBUNIT PROTEIN BL19M"/>
    <property type="match status" value="1"/>
</dbReference>
<dbReference type="PANTHER" id="PTHR15680">
    <property type="entry name" value="RIBOSOMAL PROTEIN L19"/>
    <property type="match status" value="1"/>
</dbReference>
<dbReference type="Pfam" id="PF01245">
    <property type="entry name" value="Ribosomal_L19"/>
    <property type="match status" value="1"/>
</dbReference>
<dbReference type="PIRSF" id="PIRSF002191">
    <property type="entry name" value="Ribosomal_L19"/>
    <property type="match status" value="1"/>
</dbReference>
<dbReference type="PRINTS" id="PR00061">
    <property type="entry name" value="RIBOSOMALL19"/>
</dbReference>
<dbReference type="SUPFAM" id="SSF50104">
    <property type="entry name" value="Translation proteins SH3-like domain"/>
    <property type="match status" value="1"/>
</dbReference>
<dbReference type="PROSITE" id="PS01015">
    <property type="entry name" value="RIBOSOMAL_L19"/>
    <property type="match status" value="1"/>
</dbReference>
<evidence type="ECO:0000255" key="1">
    <source>
        <dbReference type="HAMAP-Rule" id="MF_00402"/>
    </source>
</evidence>
<evidence type="ECO:0000305" key="2"/>
<organism>
    <name type="scientific">Bacillus cereus (strain G9842)</name>
    <dbReference type="NCBI Taxonomy" id="405531"/>
    <lineage>
        <taxon>Bacteria</taxon>
        <taxon>Bacillati</taxon>
        <taxon>Bacillota</taxon>
        <taxon>Bacilli</taxon>
        <taxon>Bacillales</taxon>
        <taxon>Bacillaceae</taxon>
        <taxon>Bacillus</taxon>
        <taxon>Bacillus cereus group</taxon>
    </lineage>
</organism>
<gene>
    <name evidence="1" type="primary">rplS</name>
    <name type="ordered locus">BCG9842_B1305</name>
</gene>
<proteinExistence type="inferred from homology"/>
<keyword id="KW-0687">Ribonucleoprotein</keyword>
<keyword id="KW-0689">Ribosomal protein</keyword>
<sequence length="114" mass="13167">MQQLIAEITKGQLKTDLPSFRPGDTLRVHVKVVEGTRERIQLFEGVVIKRRGGGISETFTVRKISYGVGVERTFPVHTPRIAKIEVLRRGKVRRAKLYYLRNLRGKKARIKEIR</sequence>
<comment type="function">
    <text evidence="1">This protein is located at the 30S-50S ribosomal subunit interface and may play a role in the structure and function of the aminoacyl-tRNA binding site.</text>
</comment>
<comment type="similarity">
    <text evidence="1">Belongs to the bacterial ribosomal protein bL19 family.</text>
</comment>
<name>RL19_BACC2</name>
<accession>B7IUJ9</accession>
<reference key="1">
    <citation type="submission" date="2008-10" db="EMBL/GenBank/DDBJ databases">
        <title>Genome sequence of Bacillus cereus G9842.</title>
        <authorList>
            <person name="Dodson R.J."/>
            <person name="Durkin A.S."/>
            <person name="Rosovitz M.J."/>
            <person name="Rasko D.A."/>
            <person name="Hoffmaster A."/>
            <person name="Ravel J."/>
            <person name="Sutton G."/>
        </authorList>
    </citation>
    <scope>NUCLEOTIDE SEQUENCE [LARGE SCALE GENOMIC DNA]</scope>
    <source>
        <strain>G9842</strain>
    </source>
</reference>
<feature type="chain" id="PRO_1000193792" description="Large ribosomal subunit protein bL19">
    <location>
        <begin position="1"/>
        <end position="114"/>
    </location>
</feature>